<keyword id="KW-0067">ATP-binding</keyword>
<keyword id="KW-0963">Cytoplasm</keyword>
<keyword id="KW-0275">Fatty acid biosynthesis</keyword>
<keyword id="KW-0276">Fatty acid metabolism</keyword>
<keyword id="KW-0444">Lipid biosynthesis</keyword>
<keyword id="KW-0443">Lipid metabolism</keyword>
<keyword id="KW-0479">Metal-binding</keyword>
<keyword id="KW-0547">Nucleotide-binding</keyword>
<keyword id="KW-1185">Reference proteome</keyword>
<keyword id="KW-0808">Transferase</keyword>
<keyword id="KW-0862">Zinc</keyword>
<keyword id="KW-0863">Zinc-finger</keyword>
<sequence>MSLFDWFADRRKEQSVVKVAQEPEEGDGLWSKCPECGQVVYRKDLLANASVCSNCGHHHRINSAERIALIADEGSFEAMDEALAPTDPLGFKDRRAYADRLRETQSGTGLRDGVITGMCRVDGIPMALAVMDFRFMGGSMGSVVGEKLTRLVEQATAKRLPLLIVCASGGARMQEGMLSLMQMAKISGALERHRQAGVLYMPLLTHPTTGGVTASFAMLGDLILAEPKALIGFAGRRVIEQTLREKLPDNFQTAEYLQDHGFVDTIVPRTQLKSTLANLMKLHGCLQGSAAV</sequence>
<dbReference type="EC" id="2.1.3.15" evidence="1"/>
<dbReference type="EMBL" id="CT971583">
    <property type="protein sequence ID" value="CAK23574.1"/>
    <property type="molecule type" value="Genomic_DNA"/>
</dbReference>
<dbReference type="SMR" id="A5GKV9"/>
<dbReference type="STRING" id="32051.SynWH7803_1148"/>
<dbReference type="KEGG" id="syx:SynWH7803_1148"/>
<dbReference type="eggNOG" id="COG0777">
    <property type="taxonomic scope" value="Bacteria"/>
</dbReference>
<dbReference type="HOGENOM" id="CLU_015486_1_1_3"/>
<dbReference type="OrthoDB" id="9772975at2"/>
<dbReference type="UniPathway" id="UPA00655">
    <property type="reaction ID" value="UER00711"/>
</dbReference>
<dbReference type="Proteomes" id="UP000001566">
    <property type="component" value="Chromosome"/>
</dbReference>
<dbReference type="GO" id="GO:0009317">
    <property type="term" value="C:acetyl-CoA carboxylase complex"/>
    <property type="evidence" value="ECO:0007669"/>
    <property type="project" value="InterPro"/>
</dbReference>
<dbReference type="GO" id="GO:0003989">
    <property type="term" value="F:acetyl-CoA carboxylase activity"/>
    <property type="evidence" value="ECO:0007669"/>
    <property type="project" value="InterPro"/>
</dbReference>
<dbReference type="GO" id="GO:0005524">
    <property type="term" value="F:ATP binding"/>
    <property type="evidence" value="ECO:0007669"/>
    <property type="project" value="UniProtKB-KW"/>
</dbReference>
<dbReference type="GO" id="GO:0016743">
    <property type="term" value="F:carboxyl- or carbamoyltransferase activity"/>
    <property type="evidence" value="ECO:0007669"/>
    <property type="project" value="UniProtKB-UniRule"/>
</dbReference>
<dbReference type="GO" id="GO:0008270">
    <property type="term" value="F:zinc ion binding"/>
    <property type="evidence" value="ECO:0007669"/>
    <property type="project" value="UniProtKB-UniRule"/>
</dbReference>
<dbReference type="GO" id="GO:0006633">
    <property type="term" value="P:fatty acid biosynthetic process"/>
    <property type="evidence" value="ECO:0007669"/>
    <property type="project" value="UniProtKB-KW"/>
</dbReference>
<dbReference type="GO" id="GO:2001295">
    <property type="term" value="P:malonyl-CoA biosynthetic process"/>
    <property type="evidence" value="ECO:0007669"/>
    <property type="project" value="UniProtKB-UniRule"/>
</dbReference>
<dbReference type="Gene3D" id="3.90.226.10">
    <property type="entry name" value="2-enoyl-CoA Hydratase, Chain A, domain 1"/>
    <property type="match status" value="1"/>
</dbReference>
<dbReference type="HAMAP" id="MF_01395">
    <property type="entry name" value="AcetylCoA_CT_beta"/>
    <property type="match status" value="1"/>
</dbReference>
<dbReference type="InterPro" id="IPR034733">
    <property type="entry name" value="AcCoA_carboxyl_beta"/>
</dbReference>
<dbReference type="InterPro" id="IPR000438">
    <property type="entry name" value="Acetyl_CoA_COase_Trfase_b_su"/>
</dbReference>
<dbReference type="InterPro" id="IPR029045">
    <property type="entry name" value="ClpP/crotonase-like_dom_sf"/>
</dbReference>
<dbReference type="InterPro" id="IPR011762">
    <property type="entry name" value="COA_CT_N"/>
</dbReference>
<dbReference type="InterPro" id="IPR041010">
    <property type="entry name" value="Znf-ACC"/>
</dbReference>
<dbReference type="NCBIfam" id="TIGR00515">
    <property type="entry name" value="accD"/>
    <property type="match status" value="1"/>
</dbReference>
<dbReference type="PANTHER" id="PTHR42995">
    <property type="entry name" value="ACETYL-COENZYME A CARBOXYLASE CARBOXYL TRANSFERASE SUBUNIT BETA, CHLOROPLASTIC"/>
    <property type="match status" value="1"/>
</dbReference>
<dbReference type="PANTHER" id="PTHR42995:SF5">
    <property type="entry name" value="ACETYL-COENZYME A CARBOXYLASE CARBOXYL TRANSFERASE SUBUNIT BETA, CHLOROPLASTIC"/>
    <property type="match status" value="1"/>
</dbReference>
<dbReference type="Pfam" id="PF01039">
    <property type="entry name" value="Carboxyl_trans"/>
    <property type="match status" value="1"/>
</dbReference>
<dbReference type="Pfam" id="PF17848">
    <property type="entry name" value="Zn_ribbon_ACC"/>
    <property type="match status" value="1"/>
</dbReference>
<dbReference type="PRINTS" id="PR01070">
    <property type="entry name" value="ACCCTRFRASEB"/>
</dbReference>
<dbReference type="SUPFAM" id="SSF52096">
    <property type="entry name" value="ClpP/crotonase"/>
    <property type="match status" value="1"/>
</dbReference>
<dbReference type="PROSITE" id="PS50980">
    <property type="entry name" value="COA_CT_NTER"/>
    <property type="match status" value="1"/>
</dbReference>
<evidence type="ECO:0000255" key="1">
    <source>
        <dbReference type="HAMAP-Rule" id="MF_01395"/>
    </source>
</evidence>
<evidence type="ECO:0000255" key="2">
    <source>
        <dbReference type="PROSITE-ProRule" id="PRU01136"/>
    </source>
</evidence>
<organism>
    <name type="scientific">Synechococcus sp. (strain WH7803)</name>
    <dbReference type="NCBI Taxonomy" id="32051"/>
    <lineage>
        <taxon>Bacteria</taxon>
        <taxon>Bacillati</taxon>
        <taxon>Cyanobacteriota</taxon>
        <taxon>Cyanophyceae</taxon>
        <taxon>Synechococcales</taxon>
        <taxon>Synechococcaceae</taxon>
        <taxon>Synechococcus</taxon>
    </lineage>
</organism>
<accession>A5GKV9</accession>
<gene>
    <name evidence="1" type="primary">accD</name>
    <name type="ordered locus">SynWH7803_1148</name>
</gene>
<comment type="function">
    <text evidence="1">Component of the acetyl coenzyme A carboxylase (ACC) complex. Biotin carboxylase (BC) catalyzes the carboxylation of biotin on its carrier protein (BCCP) and then the CO(2) group is transferred by the transcarboxylase to acetyl-CoA to form malonyl-CoA.</text>
</comment>
<comment type="catalytic activity">
    <reaction evidence="1">
        <text>N(6)-carboxybiotinyl-L-lysyl-[protein] + acetyl-CoA = N(6)-biotinyl-L-lysyl-[protein] + malonyl-CoA</text>
        <dbReference type="Rhea" id="RHEA:54728"/>
        <dbReference type="Rhea" id="RHEA-COMP:10505"/>
        <dbReference type="Rhea" id="RHEA-COMP:10506"/>
        <dbReference type="ChEBI" id="CHEBI:57288"/>
        <dbReference type="ChEBI" id="CHEBI:57384"/>
        <dbReference type="ChEBI" id="CHEBI:83144"/>
        <dbReference type="ChEBI" id="CHEBI:83145"/>
        <dbReference type="EC" id="2.1.3.15"/>
    </reaction>
</comment>
<comment type="cofactor">
    <cofactor evidence="1">
        <name>Zn(2+)</name>
        <dbReference type="ChEBI" id="CHEBI:29105"/>
    </cofactor>
    <text evidence="1">Binds 1 zinc ion per subunit.</text>
</comment>
<comment type="pathway">
    <text evidence="1">Lipid metabolism; malonyl-CoA biosynthesis; malonyl-CoA from acetyl-CoA: step 1/1.</text>
</comment>
<comment type="subunit">
    <text evidence="1">Acetyl-CoA carboxylase is a heterohexamer composed of biotin carboxyl carrier protein (AccB), biotin carboxylase (AccC) and two subunits each of ACCase subunit alpha (AccA) and ACCase subunit beta (AccD).</text>
</comment>
<comment type="subcellular location">
    <subcellularLocation>
        <location evidence="1">Cytoplasm</location>
    </subcellularLocation>
</comment>
<comment type="similarity">
    <text evidence="1">Belongs to the AccD/PCCB family.</text>
</comment>
<name>ACCD_SYNPW</name>
<protein>
    <recommendedName>
        <fullName evidence="1">Acetyl-coenzyme A carboxylase carboxyl transferase subunit beta</fullName>
        <shortName evidence="1">ACCase subunit beta</shortName>
        <shortName evidence="1">Acetyl-CoA carboxylase carboxyltransferase subunit beta</shortName>
        <ecNumber evidence="1">2.1.3.15</ecNumber>
    </recommendedName>
</protein>
<reference key="1">
    <citation type="submission" date="2006-05" db="EMBL/GenBank/DDBJ databases">
        <authorList>
            <consortium name="Genoscope"/>
        </authorList>
    </citation>
    <scope>NUCLEOTIDE SEQUENCE [LARGE SCALE GENOMIC DNA]</scope>
    <source>
        <strain>WH7803</strain>
    </source>
</reference>
<proteinExistence type="inferred from homology"/>
<feature type="chain" id="PRO_0000359080" description="Acetyl-coenzyme A carboxylase carboxyl transferase subunit beta">
    <location>
        <begin position="1"/>
        <end position="292"/>
    </location>
</feature>
<feature type="domain" description="CoA carboxyltransferase N-terminal" evidence="2">
    <location>
        <begin position="29"/>
        <end position="292"/>
    </location>
</feature>
<feature type="zinc finger region" description="C4-type" evidence="1">
    <location>
        <begin position="33"/>
        <end position="55"/>
    </location>
</feature>
<feature type="binding site" evidence="1">
    <location>
        <position position="33"/>
    </location>
    <ligand>
        <name>Zn(2+)</name>
        <dbReference type="ChEBI" id="CHEBI:29105"/>
    </ligand>
</feature>
<feature type="binding site" evidence="1">
    <location>
        <position position="36"/>
    </location>
    <ligand>
        <name>Zn(2+)</name>
        <dbReference type="ChEBI" id="CHEBI:29105"/>
    </ligand>
</feature>
<feature type="binding site" evidence="1">
    <location>
        <position position="52"/>
    </location>
    <ligand>
        <name>Zn(2+)</name>
        <dbReference type="ChEBI" id="CHEBI:29105"/>
    </ligand>
</feature>
<feature type="binding site" evidence="1">
    <location>
        <position position="55"/>
    </location>
    <ligand>
        <name>Zn(2+)</name>
        <dbReference type="ChEBI" id="CHEBI:29105"/>
    </ligand>
</feature>